<name>RUBB_POPEU</name>
<organism>
    <name type="scientific">Populus euphratica</name>
    <name type="common">Euphrates poplar</name>
    <dbReference type="NCBI Taxonomy" id="75702"/>
    <lineage>
        <taxon>Eukaryota</taxon>
        <taxon>Viridiplantae</taxon>
        <taxon>Streptophyta</taxon>
        <taxon>Embryophyta</taxon>
        <taxon>Tracheophyta</taxon>
        <taxon>Spermatophyta</taxon>
        <taxon>Magnoliopsida</taxon>
        <taxon>eudicotyledons</taxon>
        <taxon>Gunneridae</taxon>
        <taxon>Pentapetalae</taxon>
        <taxon>rosids</taxon>
        <taxon>fabids</taxon>
        <taxon>Malpighiales</taxon>
        <taxon>Salicaceae</taxon>
        <taxon>Saliceae</taxon>
        <taxon>Populus</taxon>
    </lineage>
</organism>
<evidence type="ECO:0000255" key="1"/>
<evidence type="ECO:0000305" key="2"/>
<keyword id="KW-0067">ATP-binding</keyword>
<keyword id="KW-0143">Chaperone</keyword>
<keyword id="KW-0150">Chloroplast</keyword>
<keyword id="KW-0903">Direct protein sequencing</keyword>
<keyword id="KW-0547">Nucleotide-binding</keyword>
<keyword id="KW-0934">Plastid</keyword>
<keyword id="KW-1185">Reference proteome</keyword>
<protein>
    <recommendedName>
        <fullName>RuBisCO large subunit-binding protein subunit beta, chloroplastic</fullName>
    </recommendedName>
    <alternativeName>
        <fullName>60 kDa chaperonin subunit beta</fullName>
    </alternativeName>
    <alternativeName>
        <fullName>CPN-60 beta</fullName>
    </alternativeName>
</protein>
<dbReference type="Proteomes" id="UP000694918">
    <property type="component" value="Unplaced"/>
</dbReference>
<dbReference type="GO" id="GO:0009507">
    <property type="term" value="C:chloroplast"/>
    <property type="evidence" value="ECO:0007669"/>
    <property type="project" value="UniProtKB-SubCell"/>
</dbReference>
<dbReference type="GO" id="GO:0005524">
    <property type="term" value="F:ATP binding"/>
    <property type="evidence" value="ECO:0007669"/>
    <property type="project" value="UniProtKB-KW"/>
</dbReference>
<comment type="function">
    <text evidence="2">This protein binds RuBisCO small and large subunits and is implicated in the assembly of the enzyme oligomer.</text>
</comment>
<comment type="subunit">
    <text evidence="2">Oligomer of probably six alpha and six beta subunits.</text>
</comment>
<comment type="subcellular location">
    <subcellularLocation>
        <location evidence="2">Plastid</location>
        <location evidence="2">Chloroplast</location>
    </subcellularLocation>
</comment>
<comment type="miscellaneous">
    <text evidence="2">This protein shows ATPase activity.</text>
</comment>
<comment type="similarity">
    <text evidence="1">Belongs to the chaperonin (HSP60) family.</text>
</comment>
<sequence>VVAAGANPVLITRDLVNVLEDAIR</sequence>
<reference key="1">
    <citation type="journal article" date="2006" name="Ann. Bot.">
        <title>Proteome profiling of Populus euphratica Oliv. upon heat stress.</title>
        <authorList>
            <person name="Ferreira S."/>
            <person name="Hjernoe K."/>
            <person name="Larsen M."/>
            <person name="Wingsle G."/>
            <person name="Larsen P."/>
            <person name="Fey S."/>
            <person name="Roepstorff P."/>
            <person name="Pais M.S."/>
        </authorList>
    </citation>
    <scope>PROTEIN SEQUENCE</scope>
    <source>
        <tissue>Leaf</tissue>
    </source>
</reference>
<accession>P84581</accession>
<proteinExistence type="evidence at protein level"/>
<feature type="chain" id="PRO_0000063633" description="RuBisCO large subunit-binding protein subunit beta, chloroplastic">
    <location>
        <begin position="1" status="less than"/>
        <end position="24" status="greater than"/>
    </location>
</feature>
<feature type="non-consecutive residues" evidence="2">
    <location>
        <begin position="13"/>
        <end position="14"/>
    </location>
</feature>
<feature type="non-terminal residue">
    <location>
        <position position="1"/>
    </location>
</feature>
<feature type="non-terminal residue">
    <location>
        <position position="24"/>
    </location>
</feature>